<name>PRIC_HAEIN</name>
<keyword id="KW-0235">DNA replication</keyword>
<keyword id="KW-0238">DNA-binding</keyword>
<keyword id="KW-0639">Primosome</keyword>
<keyword id="KW-1185">Reference proteome</keyword>
<accession>P43987</accession>
<dbReference type="EMBL" id="L42023">
    <property type="protein sequence ID" value="AAC21991.1"/>
    <property type="status" value="ALT_FRAME"/>
    <property type="molecule type" value="Genomic_DNA"/>
</dbReference>
<dbReference type="PIR" id="E64006">
    <property type="entry name" value="E64006"/>
</dbReference>
<dbReference type="SMR" id="P43987"/>
<dbReference type="STRING" id="71421.HI_0326"/>
<dbReference type="EnsemblBacteria" id="AAC21991">
    <property type="protein sequence ID" value="AAC21991"/>
    <property type="gene ID" value="HI_0326"/>
</dbReference>
<dbReference type="KEGG" id="hin:HI_0326"/>
<dbReference type="HOGENOM" id="CLU_2478991_0_0_6"/>
<dbReference type="Proteomes" id="UP000000579">
    <property type="component" value="Chromosome"/>
</dbReference>
<dbReference type="Gene3D" id="1.20.1270.340">
    <property type="match status" value="1"/>
</dbReference>
<dbReference type="InterPro" id="IPR038338">
    <property type="entry name" value="PriB/PriC_sf"/>
</dbReference>
<dbReference type="InterPro" id="IPR010890">
    <property type="entry name" value="Primosomal_replicat_PriB/PriC"/>
</dbReference>
<dbReference type="Pfam" id="PF07445">
    <property type="entry name" value="PriC"/>
    <property type="match status" value="1"/>
</dbReference>
<protein>
    <recommendedName>
        <fullName evidence="2">Replication restart protein PriC</fullName>
    </recommendedName>
</protein>
<reference key="1">
    <citation type="journal article" date="1995" name="Science">
        <title>Whole-genome random sequencing and assembly of Haemophilus influenzae Rd.</title>
        <authorList>
            <person name="Fleischmann R.D."/>
            <person name="Adams M.D."/>
            <person name="White O."/>
            <person name="Clayton R.A."/>
            <person name="Kirkness E.F."/>
            <person name="Kerlavage A.R."/>
            <person name="Bult C.J."/>
            <person name="Tomb J.-F."/>
            <person name="Dougherty B.A."/>
            <person name="Merrick J.M."/>
            <person name="McKenney K."/>
            <person name="Sutton G.G."/>
            <person name="FitzHugh W."/>
            <person name="Fields C.A."/>
            <person name="Gocayne J.D."/>
            <person name="Scott J.D."/>
            <person name="Shirley R."/>
            <person name="Liu L.-I."/>
            <person name="Glodek A."/>
            <person name="Kelley J.M."/>
            <person name="Weidman J.F."/>
            <person name="Phillips C.A."/>
            <person name="Spriggs T."/>
            <person name="Hedblom E."/>
            <person name="Cotton M.D."/>
            <person name="Utterback T.R."/>
            <person name="Hanna M.C."/>
            <person name="Nguyen D.T."/>
            <person name="Saudek D.M."/>
            <person name="Brandon R.C."/>
            <person name="Fine L.D."/>
            <person name="Fritchman J.L."/>
            <person name="Fuhrmann J.L."/>
            <person name="Geoghagen N.S.M."/>
            <person name="Gnehm C.L."/>
            <person name="McDonald L.A."/>
            <person name="Small K.V."/>
            <person name="Fraser C.M."/>
            <person name="Smith H.O."/>
            <person name="Venter J.C."/>
        </authorList>
    </citation>
    <scope>NUCLEOTIDE SEQUENCE [LARGE SCALE GENOMIC DNA]</scope>
    <source>
        <strain>ATCC 51907 / DSM 11121 / KW20 / Rd</strain>
    </source>
</reference>
<organism>
    <name type="scientific">Haemophilus influenzae (strain ATCC 51907 / DSM 11121 / KW20 / Rd)</name>
    <dbReference type="NCBI Taxonomy" id="71421"/>
    <lineage>
        <taxon>Bacteria</taxon>
        <taxon>Pseudomonadati</taxon>
        <taxon>Pseudomonadota</taxon>
        <taxon>Gammaproteobacteria</taxon>
        <taxon>Pasteurellales</taxon>
        <taxon>Pasteurellaceae</taxon>
        <taxon>Haemophilus</taxon>
    </lineage>
</organism>
<feature type="chain" id="PRO_0000077913" description="Replication restart protein PriC">
    <location>
        <begin position="1"/>
        <end position="195"/>
    </location>
</feature>
<proteinExistence type="inferred from homology"/>
<gene>
    <name evidence="2" type="primary">priC</name>
    <name type="ordered locus">HI_0326</name>
</gene>
<evidence type="ECO:0000250" key="1">
    <source>
        <dbReference type="UniProtKB" id="P23862"/>
    </source>
</evidence>
<evidence type="ECO:0000305" key="2"/>
<sequence>MTVQQLIQRLDQKVQQLYQAHLSKREEKIFAKFDRTLFSENGQNVSFYLKEINQTLDRIKTLESNDSNHYNFLAERLLAQCSVLSEALVRKNTHLTESQTTTKQTIQKSQHSIHKLPPRERLEKYYEAREQLNNLYRQHKDLAQAEKNNDEKIRYAQLAEVYKKRQQKCQDAIDLLEEYLVFKEEVENRENTENK</sequence>
<comment type="function">
    <text evidence="1">Involved in the restart of stalled replication forks, which reloads the DnaB replicative helicase on sites other than the origin of replication. Recognizes abandoned replication forks and remodels DNA single-stranded binding protein (SSB) on ssDNA to uncover a loading site for DnaB. There are several restart pathways, the PriA-PriC pathway is a minor restart pathway. Part of the minor PriC-Rep pathway for restart of stalled replication forks, which has a different substrate specificity than PriA. Part of the major restart pathway with PriA, PriB, DnaB, DnaT and DnaG primase. priB and priC have redundant roles in the cell (By similarity).</text>
</comment>
<comment type="subunit">
    <text evidence="1">Monomer (By similarity). Component of the replication restart primosome, which is composed of PriA, PriB, PriC, DnaB and DnaT; DnaG primase associates transiently with this complex (By similarity). Interacts with the C-terminus of SSB; this interaction is required to load the main replicative helicase onto substrate replication forks (By similarity). Interacts with helicase DnaB alone and in the DnaB-DnaC complex, probably 1:1 binding with DnaB (By similarity).</text>
</comment>
<comment type="similarity">
    <text evidence="2">Belongs to the PriC family.</text>
</comment>
<comment type="sequence caution" evidence="2">
    <conflict type="frameshift">
        <sequence resource="EMBL-CDS" id="AAC21991"/>
    </conflict>
</comment>